<reference key="1">
    <citation type="journal article" date="1998" name="Nature">
        <title>Deciphering the biology of Mycobacterium tuberculosis from the complete genome sequence.</title>
        <authorList>
            <person name="Cole S.T."/>
            <person name="Brosch R."/>
            <person name="Parkhill J."/>
            <person name="Garnier T."/>
            <person name="Churcher C.M."/>
            <person name="Harris D.E."/>
            <person name="Gordon S.V."/>
            <person name="Eiglmeier K."/>
            <person name="Gas S."/>
            <person name="Barry C.E. III"/>
            <person name="Tekaia F."/>
            <person name="Badcock K."/>
            <person name="Basham D."/>
            <person name="Brown D."/>
            <person name="Chillingworth T."/>
            <person name="Connor R."/>
            <person name="Davies R.M."/>
            <person name="Devlin K."/>
            <person name="Feltwell T."/>
            <person name="Gentles S."/>
            <person name="Hamlin N."/>
            <person name="Holroyd S."/>
            <person name="Hornsby T."/>
            <person name="Jagels K."/>
            <person name="Krogh A."/>
            <person name="McLean J."/>
            <person name="Moule S."/>
            <person name="Murphy L.D."/>
            <person name="Oliver S."/>
            <person name="Osborne J."/>
            <person name="Quail M.A."/>
            <person name="Rajandream M.A."/>
            <person name="Rogers J."/>
            <person name="Rutter S."/>
            <person name="Seeger K."/>
            <person name="Skelton S."/>
            <person name="Squares S."/>
            <person name="Squares R."/>
            <person name="Sulston J.E."/>
            <person name="Taylor K."/>
            <person name="Whitehead S."/>
            <person name="Barrell B.G."/>
        </authorList>
    </citation>
    <scope>NUCLEOTIDE SEQUENCE [LARGE SCALE GENOMIC DNA]</scope>
    <source>
        <strain>ATCC 25618 / H37Rv</strain>
    </source>
</reference>
<reference key="2">
    <citation type="submission" date="2013-11" db="EMBL/GenBank/DDBJ databases">
        <title>The genome sequence of Mycobacterium tuberculosis H37Rv.</title>
        <authorList>
            <consortium name="The Broad Institute Genome Sequencing Platform"/>
            <person name="Galagan J."/>
            <person name="Kreiswirth B."/>
            <person name="Dobos K."/>
            <person name="Fortune S."/>
            <person name="Fitzgerald M."/>
            <person name="Young S.K."/>
            <person name="Zeng Q."/>
            <person name="Gargeya S."/>
            <person name="Abouelleil A."/>
            <person name="Alvarado L."/>
            <person name="Berlin A.M."/>
            <person name="Chapman S.B."/>
            <person name="Gainer-Dewar J."/>
            <person name="Goldberg J."/>
            <person name="Gnerre S."/>
            <person name="Griggs A."/>
            <person name="Gujja S."/>
            <person name="Hansen M."/>
            <person name="Howarth C."/>
            <person name="Imamovic A."/>
            <person name="Larimer J."/>
            <person name="McCowan C."/>
            <person name="Murphy C."/>
            <person name="Pearson M."/>
            <person name="Poon T."/>
            <person name="Priest M."/>
            <person name="Roberts A."/>
            <person name="Saif S."/>
            <person name="Shea T."/>
            <person name="Sykes S."/>
            <person name="Wortman J."/>
            <person name="Nusbaum C."/>
            <person name="Birren B."/>
        </authorList>
    </citation>
    <scope>NUCLEOTIDE SEQUENCE [LARGE SCALE GENOMIC DNA]</scope>
    <source>
        <strain>ATCC 25618 / H37Rv</strain>
    </source>
</reference>
<reference key="3">
    <citation type="submission" date="2014-04" db="EMBL/GenBank/DDBJ databases">
        <title>The genome sequence of Mycobacterium tuberculosis H37Rv.</title>
        <authorList>
            <consortium name="The Broad Institute Genomics Platform"/>
            <consortium name="The Broad Institute Genome Sequencing Center for Infectious Disease"/>
            <person name="Earl A.M."/>
            <person name="Kreiswirth B."/>
            <person name="Gomez J."/>
            <person name="Victor T."/>
            <person name="Desjardins C."/>
            <person name="Abeel T."/>
            <person name="Young S."/>
            <person name="Zeng Q."/>
            <person name="Gargeya S."/>
            <person name="Abouelleil A."/>
            <person name="Alvarado L."/>
            <person name="Chapman S.B."/>
            <person name="Gainer-Dewar J."/>
            <person name="Goldberg J."/>
            <person name="Griggs A."/>
            <person name="Gujja S."/>
            <person name="Hansen M."/>
            <person name="Howarth C."/>
            <person name="Imamovic A."/>
            <person name="Larimer J."/>
            <person name="Murphy C."/>
            <person name="Naylor J."/>
            <person name="Pearson M."/>
            <person name="Poon T.W."/>
            <person name="Priest M."/>
            <person name="Roberts A."/>
            <person name="Saif S."/>
            <person name="Shea T."/>
            <person name="Sykes S."/>
            <person name="Wortman J."/>
            <person name="Nusbaum C."/>
            <person name="Birren B."/>
        </authorList>
    </citation>
    <scope>NUCLEOTIDE SEQUENCE [LARGE SCALE GENOMIC DNA]</scope>
    <source>
        <strain>ATCC 25618 / H37Rv</strain>
    </source>
</reference>
<reference key="4">
    <citation type="journal article" date="2022" name="Genomics">
        <title>Deep N-terminomics of Mycobacterium tuberculosis H37Rv extensively correct annotated encoding genes.</title>
        <authorList>
            <person name="Shi J."/>
            <person name="Meng S."/>
            <person name="Wan L."/>
            <person name="Zhang Z."/>
            <person name="Jiang S."/>
            <person name="Zhu H."/>
            <person name="Dai E."/>
            <person name="Chang L."/>
            <person name="Gao H."/>
            <person name="Wan K."/>
            <person name="Zhang L."/>
            <person name="Zhao X."/>
            <person name="Liu H."/>
            <person name="Lyu Z."/>
            <person name="Zhang Y."/>
            <person name="Xu P."/>
        </authorList>
    </citation>
    <scope>PROTEIN SEQUENCE OF 5-26</scope>
    <scope>SEQUENCE REVISION TO N-TERMINUS</scope>
    <source>
        <strain>H37Rv</strain>
    </source>
</reference>
<reference key="5">
    <citation type="journal article" date="2011" name="Mol. Cell. Proteomics">
        <title>Proteogenomic analysis of Mycobacterium tuberculosis by high resolution mass spectrometry.</title>
        <authorList>
            <person name="Kelkar D.S."/>
            <person name="Kumar D."/>
            <person name="Kumar P."/>
            <person name="Balakrishnan L."/>
            <person name="Muthusamy B."/>
            <person name="Yadav A.K."/>
            <person name="Shrivastava P."/>
            <person name="Marimuthu A."/>
            <person name="Anand S."/>
            <person name="Sundaram H."/>
            <person name="Kingsbury R."/>
            <person name="Harsha H.C."/>
            <person name="Nair B."/>
            <person name="Prasad T.S."/>
            <person name="Chauhan D.S."/>
            <person name="Katoch K."/>
            <person name="Katoch V.M."/>
            <person name="Kumar P."/>
            <person name="Chaerkady R."/>
            <person name="Ramachandran S."/>
            <person name="Dash D."/>
            <person name="Pandey A."/>
        </authorList>
    </citation>
    <scope>IDENTIFICATION BY MASS SPECTROMETRY [LARGE SCALE ANALYSIS]</scope>
    <source>
        <strain>ATCC 25618 / H37Rv</strain>
    </source>
</reference>
<sequence>MTGRVGNPKDHAVVIGASIAGLCAARVLSDFYSTVTVFERDELPEAPANRATVPQDRHLHMLMARGAQEFDSLFPGLLHDMVAAGVPMLENRPDCIYLGAAGHVLGTGHTLRKEFTAYVPSRPHLEWQLRRRVLQLSNVQIVRRLVTEPQFERRQQRVVGVLLDSPGSGQDREREEFIAADLVVDAAGRGTRLPVWLTQWGYRRPAEDTVDIGISYASHQFRIPDGLIAEKVVVAGASHDQSLGLGMLCYEDGTWVLTTFGVADAKPPPTFDEMRALADKLLPARFTAALAQAQPIGCPAFHAFPASRWRRYDKLERFPRGIVPFGDAVASFNPTFGQGMTMTSLQAGHLRRALKARNSAMKGDLAAELNRATAKTTYPVWMMNAIGDISFHHATAEPLPRWWRPAGSLFDQFLGAAETDPVLAEWFLRRFSLLDSLYMVPSVPIIGRAIAHNLRLWLKEQRERRQPVTTRRSP</sequence>
<accession>O05897</accession>
<accession>I6XGQ4</accession>
<accession>L0TC96</accession>
<dbReference type="EMBL" id="AL123456">
    <property type="protein sequence ID" value="CCP46073.1"/>
    <property type="status" value="ALT_INIT"/>
    <property type="molecule type" value="Genomic_DNA"/>
</dbReference>
<dbReference type="EMBL" id="CP003248">
    <property type="protein sequence ID" value="AFN51259.1"/>
    <property type="status" value="ALT_INIT"/>
    <property type="molecule type" value="Genomic_DNA"/>
</dbReference>
<dbReference type="EMBL" id="JLDD01000039">
    <property type="protein sequence ID" value="KBJ28301.1"/>
    <property type="status" value="ALT_INIT"/>
    <property type="molecule type" value="Genomic_DNA"/>
</dbReference>
<dbReference type="RefSeq" id="NP_217771.1">
    <property type="nucleotide sequence ID" value="NC_000962.3"/>
</dbReference>
<dbReference type="SMR" id="O05897"/>
<dbReference type="STRING" id="83332.Rv3254"/>
<dbReference type="PaxDb" id="83332-Rv3254"/>
<dbReference type="DNASU" id="887237"/>
<dbReference type="GeneID" id="887237"/>
<dbReference type="KEGG" id="mtu:Rv3254"/>
<dbReference type="KEGG" id="mtv:RVBD_3254"/>
<dbReference type="PATRIC" id="fig|83332.111.peg.3633"/>
<dbReference type="TubercuList" id="Rv3254"/>
<dbReference type="eggNOG" id="COG0654">
    <property type="taxonomic scope" value="Bacteria"/>
</dbReference>
<dbReference type="InParanoid" id="O05897"/>
<dbReference type="OrthoDB" id="9790035at2"/>
<dbReference type="Proteomes" id="UP000001584">
    <property type="component" value="Chromosome"/>
</dbReference>
<dbReference type="GO" id="GO:0005829">
    <property type="term" value="C:cytosol"/>
    <property type="evidence" value="ECO:0007005"/>
    <property type="project" value="MTBBASE"/>
</dbReference>
<dbReference type="GO" id="GO:0009274">
    <property type="term" value="C:peptidoglycan-based cell wall"/>
    <property type="evidence" value="ECO:0007005"/>
    <property type="project" value="MTBBASE"/>
</dbReference>
<dbReference type="GO" id="GO:0005886">
    <property type="term" value="C:plasma membrane"/>
    <property type="evidence" value="ECO:0007005"/>
    <property type="project" value="MTBBASE"/>
</dbReference>
<dbReference type="GO" id="GO:0005506">
    <property type="term" value="F:iron ion binding"/>
    <property type="evidence" value="ECO:0000318"/>
    <property type="project" value="GO_Central"/>
</dbReference>
<dbReference type="GO" id="GO:0052837">
    <property type="term" value="P:thiazole biosynthetic process"/>
    <property type="evidence" value="ECO:0000318"/>
    <property type="project" value="GO_Central"/>
</dbReference>
<dbReference type="Gene3D" id="3.50.50.60">
    <property type="entry name" value="FAD/NAD(P)-binding domain"/>
    <property type="match status" value="1"/>
</dbReference>
<dbReference type="InterPro" id="IPR036188">
    <property type="entry name" value="FAD/NAD-bd_sf"/>
</dbReference>
<dbReference type="PANTHER" id="PTHR43422">
    <property type="entry name" value="THIAMINE THIAZOLE SYNTHASE"/>
    <property type="match status" value="1"/>
</dbReference>
<dbReference type="PANTHER" id="PTHR43422:SF3">
    <property type="entry name" value="THIAMINE THIAZOLE SYNTHASE"/>
    <property type="match status" value="1"/>
</dbReference>
<dbReference type="SUPFAM" id="SSF51905">
    <property type="entry name" value="FAD/NAD(P)-binding domain"/>
    <property type="match status" value="1"/>
</dbReference>
<evidence type="ECO:0000269" key="1">
    <source>
    </source>
</evidence>
<evidence type="ECO:0000305" key="2"/>
<evidence type="ECO:0000312" key="3">
    <source>
        <dbReference type="EMBL" id="AFN51259.1"/>
    </source>
</evidence>
<evidence type="ECO:0000312" key="4">
    <source>
        <dbReference type="EMBL" id="CCP46073.1"/>
    </source>
</evidence>
<evidence type="ECO:0000312" key="5">
    <source>
        <dbReference type="EMBL" id="KBJ28301.1"/>
    </source>
</evidence>
<protein>
    <recommendedName>
        <fullName evidence="2">Protein Rv3254</fullName>
    </recommendedName>
</protein>
<comment type="sequence caution" evidence="1">
    <conflict type="erroneous initiation">
        <sequence resource="EMBL-CDS" id="AFN51259"/>
    </conflict>
    <text>Truncated N-terminus.</text>
</comment>
<comment type="sequence caution" evidence="1">
    <conflict type="erroneous initiation">
        <sequence resource="EMBL-CDS" id="CCP46073"/>
    </conflict>
    <text>Truncated N-terminus.</text>
</comment>
<comment type="sequence caution" evidence="1">
    <conflict type="erroneous initiation">
        <sequence resource="EMBL-CDS" id="KBJ28301"/>
    </conflict>
    <text>Truncated N-terminus.</text>
</comment>
<gene>
    <name evidence="4" type="ordered locus">Rv3254</name>
    <name evidence="3" type="ordered locus">RVBD_3254</name>
    <name evidence="5" type="ORF">P425_03394</name>
</gene>
<name>Y3254_MYCTU</name>
<proteinExistence type="evidence at protein level"/>
<organism>
    <name type="scientific">Mycobacterium tuberculosis (strain ATCC 25618 / H37Rv)</name>
    <dbReference type="NCBI Taxonomy" id="83332"/>
    <lineage>
        <taxon>Bacteria</taxon>
        <taxon>Bacillati</taxon>
        <taxon>Actinomycetota</taxon>
        <taxon>Actinomycetes</taxon>
        <taxon>Mycobacteriales</taxon>
        <taxon>Mycobacteriaceae</taxon>
        <taxon>Mycobacterium</taxon>
        <taxon>Mycobacterium tuberculosis complex</taxon>
    </lineage>
</organism>
<keyword id="KW-0903">Direct protein sequencing</keyword>
<keyword id="KW-1185">Reference proteome</keyword>
<feature type="propeptide" id="PRO_0000455444" evidence="1">
    <location>
        <begin position="1"/>
        <end position="4"/>
    </location>
</feature>
<feature type="chain" id="PRO_0000432521" description="Protein Rv3254">
    <location>
        <begin position="5"/>
        <end position="474"/>
    </location>
</feature>